<protein>
    <recommendedName>
        <fullName>Uncharacterized protein Rv2305</fullName>
    </recommendedName>
</protein>
<keyword id="KW-1185">Reference proteome</keyword>
<dbReference type="EMBL" id="AL123456">
    <property type="protein sequence ID" value="CCP45087.1"/>
    <property type="molecule type" value="Genomic_DNA"/>
</dbReference>
<dbReference type="PIR" id="E70734">
    <property type="entry name" value="E70734"/>
</dbReference>
<dbReference type="RefSeq" id="NP_216821.1">
    <property type="nucleotide sequence ID" value="NC_000962.3"/>
</dbReference>
<dbReference type="RefSeq" id="WP_003899261.1">
    <property type="nucleotide sequence ID" value="NZ_NVQJ01000012.1"/>
</dbReference>
<dbReference type="SMR" id="P9WLD1"/>
<dbReference type="STRING" id="83332.Rv2305"/>
<dbReference type="PaxDb" id="83332-Rv2305"/>
<dbReference type="DNASU" id="885752"/>
<dbReference type="GeneID" id="885752"/>
<dbReference type="KEGG" id="mtu:Rv2305"/>
<dbReference type="KEGG" id="mtv:RVBD_2305"/>
<dbReference type="TubercuList" id="Rv2305"/>
<dbReference type="eggNOG" id="COG1020">
    <property type="taxonomic scope" value="Bacteria"/>
</dbReference>
<dbReference type="InParanoid" id="P9WLD1"/>
<dbReference type="OrthoDB" id="4578617at2"/>
<dbReference type="Proteomes" id="UP000001584">
    <property type="component" value="Chromosome"/>
</dbReference>
<dbReference type="GO" id="GO:0005886">
    <property type="term" value="C:plasma membrane"/>
    <property type="evidence" value="ECO:0007005"/>
    <property type="project" value="MTBBASE"/>
</dbReference>
<dbReference type="Gene3D" id="3.30.559.10">
    <property type="entry name" value="Chloramphenicol acetyltransferase-like domain"/>
    <property type="match status" value="1"/>
</dbReference>
<dbReference type="Gene3D" id="3.30.559.30">
    <property type="entry name" value="Nonribosomal peptide synthetase, condensation domain"/>
    <property type="match status" value="1"/>
</dbReference>
<dbReference type="InterPro" id="IPR023213">
    <property type="entry name" value="CAT-like_dom_sf"/>
</dbReference>
<dbReference type="SUPFAM" id="SSF52777">
    <property type="entry name" value="CoA-dependent acyltransferases"/>
    <property type="match status" value="2"/>
</dbReference>
<organism>
    <name type="scientific">Mycobacterium tuberculosis (strain ATCC 25618 / H37Rv)</name>
    <dbReference type="NCBI Taxonomy" id="83332"/>
    <lineage>
        <taxon>Bacteria</taxon>
        <taxon>Bacillati</taxon>
        <taxon>Actinomycetota</taxon>
        <taxon>Actinomycetes</taxon>
        <taxon>Mycobacteriales</taxon>
        <taxon>Mycobacteriaceae</taxon>
        <taxon>Mycobacterium</taxon>
        <taxon>Mycobacterium tuberculosis complex</taxon>
    </lineage>
</organism>
<reference key="1">
    <citation type="journal article" date="1998" name="Nature">
        <title>Deciphering the biology of Mycobacterium tuberculosis from the complete genome sequence.</title>
        <authorList>
            <person name="Cole S.T."/>
            <person name="Brosch R."/>
            <person name="Parkhill J."/>
            <person name="Garnier T."/>
            <person name="Churcher C.M."/>
            <person name="Harris D.E."/>
            <person name="Gordon S.V."/>
            <person name="Eiglmeier K."/>
            <person name="Gas S."/>
            <person name="Barry C.E. III"/>
            <person name="Tekaia F."/>
            <person name="Badcock K."/>
            <person name="Basham D."/>
            <person name="Brown D."/>
            <person name="Chillingworth T."/>
            <person name="Connor R."/>
            <person name="Davies R.M."/>
            <person name="Devlin K."/>
            <person name="Feltwell T."/>
            <person name="Gentles S."/>
            <person name="Hamlin N."/>
            <person name="Holroyd S."/>
            <person name="Hornsby T."/>
            <person name="Jagels K."/>
            <person name="Krogh A."/>
            <person name="McLean J."/>
            <person name="Moule S."/>
            <person name="Murphy L.D."/>
            <person name="Oliver S."/>
            <person name="Osborne J."/>
            <person name="Quail M.A."/>
            <person name="Rajandream M.A."/>
            <person name="Rogers J."/>
            <person name="Rutter S."/>
            <person name="Seeger K."/>
            <person name="Skelton S."/>
            <person name="Squares S."/>
            <person name="Squares R."/>
            <person name="Sulston J.E."/>
            <person name="Taylor K."/>
            <person name="Whitehead S."/>
            <person name="Barrell B.G."/>
        </authorList>
    </citation>
    <scope>NUCLEOTIDE SEQUENCE [LARGE SCALE GENOMIC DNA]</scope>
    <source>
        <strain>ATCC 25618 / H37Rv</strain>
    </source>
</reference>
<reference key="2">
    <citation type="journal article" date="2011" name="Mol. Cell. Proteomics">
        <title>Proteogenomic analysis of Mycobacterium tuberculosis by high resolution mass spectrometry.</title>
        <authorList>
            <person name="Kelkar D.S."/>
            <person name="Kumar D."/>
            <person name="Kumar P."/>
            <person name="Balakrishnan L."/>
            <person name="Muthusamy B."/>
            <person name="Yadav A.K."/>
            <person name="Shrivastava P."/>
            <person name="Marimuthu A."/>
            <person name="Anand S."/>
            <person name="Sundaram H."/>
            <person name="Kingsbury R."/>
            <person name="Harsha H.C."/>
            <person name="Nair B."/>
            <person name="Prasad T.S."/>
            <person name="Chauhan D.S."/>
            <person name="Katoch K."/>
            <person name="Katoch V.M."/>
            <person name="Kumar P."/>
            <person name="Chaerkady R."/>
            <person name="Ramachandran S."/>
            <person name="Dash D."/>
            <person name="Pandey A."/>
        </authorList>
    </citation>
    <scope>IDENTIFICATION BY MASS SPECTROMETRY [LARGE SCALE ANALYSIS]</scope>
    <source>
        <strain>ATCC 25618 / H37Rv</strain>
    </source>
</reference>
<name>Y2305_MYCTU</name>
<sequence length="429" mass="46124">MTQTLRLTALDEMFITDDIDIVPSVQIEARVSGRFDLDRLAAALRAAVAKHALARARLGRASLTARTLYWEVPDRADHLAVEITDEPVGEVRSRFYARAPELHRSPVFAVAVVRETVGDRLLLNFHHAAFDGMGGLRLLLSLARAYAGEPDEVGGPPIEEARNLKGVAGSRDLFDVLIRARGLAKPAIDRKRTTRVAPDGGSPDGPRFVFAPLTIESDEMATAVARRPEGATVNDLAMAALALTILQWNRTHDVPAADSVSVNMPVNFRPTAWSTEVISNFASYLAIVLRVDEVTDLEKATAIVAGITGPLKQSGAAGWVVDLLEGGKVLPAMLKRQLQLLLPLVEDRFVESVCLSNLGRVDVPAFGGEAGDTTEVWFSPTAAMSVMPIGVGLVGFGGTLRAMFRGDGRTIGGEALGRFAALYRDTLLT</sequence>
<accession>P9WLD1</accession>
<accession>L0TBX0</accession>
<accession>Q50660</accession>
<gene>
    <name type="ordered locus">Rv2305</name>
    <name type="ORF">MTCY339.04c</name>
</gene>
<feature type="chain" id="PRO_0000104015" description="Uncharacterized protein Rv2305">
    <location>
        <begin position="1"/>
        <end position="429"/>
    </location>
</feature>
<proteinExistence type="evidence at protein level"/>